<keyword id="KW-0025">Alternative splicing</keyword>
<keyword id="KW-0963">Cytoplasm</keyword>
<keyword id="KW-0378">Hydrolase</keyword>
<keyword id="KW-0433">Leucine-rich repeat</keyword>
<keyword id="KW-0464">Manganese</keyword>
<keyword id="KW-0472">Membrane</keyword>
<keyword id="KW-0479">Metal-binding</keyword>
<keyword id="KW-0539">Nucleus</keyword>
<keyword id="KW-0597">Phosphoprotein</keyword>
<keyword id="KW-0904">Protein phosphatase</keyword>
<keyword id="KW-1267">Proteomics identification</keyword>
<keyword id="KW-1185">Reference proteome</keyword>
<keyword id="KW-0677">Repeat</keyword>
<keyword id="KW-0043">Tumor suppressor</keyword>
<evidence type="ECO:0000250" key="1"/>
<evidence type="ECO:0000250" key="2">
    <source>
        <dbReference type="UniProtKB" id="P35813"/>
    </source>
</evidence>
<evidence type="ECO:0000255" key="3">
    <source>
        <dbReference type="PROSITE-ProRule" id="PRU01082"/>
    </source>
</evidence>
<evidence type="ECO:0000256" key="4">
    <source>
        <dbReference type="SAM" id="MobiDB-lite"/>
    </source>
</evidence>
<evidence type="ECO:0000269" key="5">
    <source>
    </source>
</evidence>
<evidence type="ECO:0000269" key="6">
    <source>
    </source>
</evidence>
<evidence type="ECO:0000269" key="7">
    <source>
    </source>
</evidence>
<evidence type="ECO:0000269" key="8">
    <source>
    </source>
</evidence>
<evidence type="ECO:0000269" key="9">
    <source>
    </source>
</evidence>
<evidence type="ECO:0000269" key="10">
    <source>
    </source>
</evidence>
<evidence type="ECO:0000269" key="11">
    <source>
    </source>
</evidence>
<evidence type="ECO:0000269" key="12">
    <source>
    </source>
</evidence>
<evidence type="ECO:0000269" key="13">
    <source>
    </source>
</evidence>
<evidence type="ECO:0000303" key="14">
    <source>
    </source>
</evidence>
<evidence type="ECO:0000303" key="15">
    <source>
    </source>
</evidence>
<evidence type="ECO:0000305" key="16"/>
<evidence type="ECO:0007744" key="17">
    <source>
    </source>
</evidence>
<name>PHLP2_HUMAN</name>
<reference key="1">
    <citation type="journal article" date="1999" name="DNA Res.">
        <title>Prediction of the coding sequences of unidentified human genes. XIII. The complete sequences of 100 new cDNA clones from brain which code for large proteins in vitro.</title>
        <authorList>
            <person name="Nagase T."/>
            <person name="Ishikawa K."/>
            <person name="Suyama M."/>
            <person name="Kikuno R."/>
            <person name="Hirosawa M."/>
            <person name="Miyajima N."/>
            <person name="Tanaka A."/>
            <person name="Kotani H."/>
            <person name="Nomura N."/>
            <person name="Ohara O."/>
        </authorList>
    </citation>
    <scope>NUCLEOTIDE SEQUENCE [LARGE SCALE MRNA] (ISOFORM 3)</scope>
    <source>
        <tissue>Brain</tissue>
    </source>
</reference>
<reference key="2">
    <citation type="submission" date="2005-08" db="EMBL/GenBank/DDBJ databases">
        <authorList>
            <person name="Ohara O."/>
            <person name="Nagase T."/>
            <person name="Kikuno R."/>
        </authorList>
    </citation>
    <scope>SEQUENCE REVISION</scope>
</reference>
<reference key="3">
    <citation type="journal article" date="2007" name="BMC Genomics">
        <title>The full-ORF clone resource of the German cDNA consortium.</title>
        <authorList>
            <person name="Bechtel S."/>
            <person name="Rosenfelder H."/>
            <person name="Duda A."/>
            <person name="Schmidt C.P."/>
            <person name="Ernst U."/>
            <person name="Wellenreuther R."/>
            <person name="Mehrle A."/>
            <person name="Schuster C."/>
            <person name="Bahr A."/>
            <person name="Bloecker H."/>
            <person name="Heubner D."/>
            <person name="Hoerlein A."/>
            <person name="Michel G."/>
            <person name="Wedler H."/>
            <person name="Koehrer K."/>
            <person name="Ottenwaelder B."/>
            <person name="Poustka A."/>
            <person name="Wiemann S."/>
            <person name="Schupp I."/>
        </authorList>
    </citation>
    <scope>NUCLEOTIDE SEQUENCE [LARGE SCALE MRNA] (ISOFORM 1)</scope>
    <source>
        <tissue>Retina</tissue>
    </source>
</reference>
<reference key="4">
    <citation type="journal article" date="2004" name="Nature">
        <title>The sequence and analysis of duplication-rich human chromosome 16.</title>
        <authorList>
            <person name="Martin J."/>
            <person name="Han C."/>
            <person name="Gordon L.A."/>
            <person name="Terry A."/>
            <person name="Prabhakar S."/>
            <person name="She X."/>
            <person name="Xie G."/>
            <person name="Hellsten U."/>
            <person name="Chan Y.M."/>
            <person name="Altherr M."/>
            <person name="Couronne O."/>
            <person name="Aerts A."/>
            <person name="Bajorek E."/>
            <person name="Black S."/>
            <person name="Blumer H."/>
            <person name="Branscomb E."/>
            <person name="Brown N.C."/>
            <person name="Bruno W.J."/>
            <person name="Buckingham J.M."/>
            <person name="Callen D.F."/>
            <person name="Campbell C.S."/>
            <person name="Campbell M.L."/>
            <person name="Campbell E.W."/>
            <person name="Caoile C."/>
            <person name="Challacombe J.F."/>
            <person name="Chasteen L.A."/>
            <person name="Chertkov O."/>
            <person name="Chi H.C."/>
            <person name="Christensen M."/>
            <person name="Clark L.M."/>
            <person name="Cohn J.D."/>
            <person name="Denys M."/>
            <person name="Detter J.C."/>
            <person name="Dickson M."/>
            <person name="Dimitrijevic-Bussod M."/>
            <person name="Escobar J."/>
            <person name="Fawcett J.J."/>
            <person name="Flowers D."/>
            <person name="Fotopulos D."/>
            <person name="Glavina T."/>
            <person name="Gomez M."/>
            <person name="Gonzales E."/>
            <person name="Goodstein D."/>
            <person name="Goodwin L.A."/>
            <person name="Grady D.L."/>
            <person name="Grigoriev I."/>
            <person name="Groza M."/>
            <person name="Hammon N."/>
            <person name="Hawkins T."/>
            <person name="Haydu L."/>
            <person name="Hildebrand C.E."/>
            <person name="Huang W."/>
            <person name="Israni S."/>
            <person name="Jett J."/>
            <person name="Jewett P.B."/>
            <person name="Kadner K."/>
            <person name="Kimball H."/>
            <person name="Kobayashi A."/>
            <person name="Krawczyk M.-C."/>
            <person name="Leyba T."/>
            <person name="Longmire J.L."/>
            <person name="Lopez F."/>
            <person name="Lou Y."/>
            <person name="Lowry S."/>
            <person name="Ludeman T."/>
            <person name="Manohar C.F."/>
            <person name="Mark G.A."/>
            <person name="McMurray K.L."/>
            <person name="Meincke L.J."/>
            <person name="Morgan J."/>
            <person name="Moyzis R.K."/>
            <person name="Mundt M.O."/>
            <person name="Munk A.C."/>
            <person name="Nandkeshwar R.D."/>
            <person name="Pitluck S."/>
            <person name="Pollard M."/>
            <person name="Predki P."/>
            <person name="Parson-Quintana B."/>
            <person name="Ramirez L."/>
            <person name="Rash S."/>
            <person name="Retterer J."/>
            <person name="Ricke D.O."/>
            <person name="Robinson D.L."/>
            <person name="Rodriguez A."/>
            <person name="Salamov A."/>
            <person name="Saunders E.H."/>
            <person name="Scott D."/>
            <person name="Shough T."/>
            <person name="Stallings R.L."/>
            <person name="Stalvey M."/>
            <person name="Sutherland R.D."/>
            <person name="Tapia R."/>
            <person name="Tesmer J.G."/>
            <person name="Thayer N."/>
            <person name="Thompson L.S."/>
            <person name="Tice H."/>
            <person name="Torney D.C."/>
            <person name="Tran-Gyamfi M."/>
            <person name="Tsai M."/>
            <person name="Ulanovsky L.E."/>
            <person name="Ustaszewska A."/>
            <person name="Vo N."/>
            <person name="White P.S."/>
            <person name="Williams A.L."/>
            <person name="Wills P.L."/>
            <person name="Wu J.-R."/>
            <person name="Wu K."/>
            <person name="Yang J."/>
            <person name="DeJong P."/>
            <person name="Bruce D."/>
            <person name="Doggett N.A."/>
            <person name="Deaven L."/>
            <person name="Schmutz J."/>
            <person name="Grimwood J."/>
            <person name="Richardson P."/>
            <person name="Rokhsar D.S."/>
            <person name="Eichler E.E."/>
            <person name="Gilna P."/>
            <person name="Lucas S.M."/>
            <person name="Myers R.M."/>
            <person name="Rubin E.M."/>
            <person name="Pennacchio L.A."/>
        </authorList>
    </citation>
    <scope>NUCLEOTIDE SEQUENCE [LARGE SCALE GENOMIC DNA]</scope>
</reference>
<reference key="5">
    <citation type="journal article" date="2004" name="Genome Res.">
        <title>The status, quality, and expansion of the NIH full-length cDNA project: the Mammalian Gene Collection (MGC).</title>
        <authorList>
            <consortium name="The MGC Project Team"/>
        </authorList>
    </citation>
    <scope>NUCLEOTIDE SEQUENCE [LARGE SCALE MRNA] (ISOFORM 1)</scope>
</reference>
<reference key="6">
    <citation type="journal article" date="2004" name="Nat. Genet.">
        <title>Complete sequencing and characterization of 21,243 full-length human cDNAs.</title>
        <authorList>
            <person name="Ota T."/>
            <person name="Suzuki Y."/>
            <person name="Nishikawa T."/>
            <person name="Otsuki T."/>
            <person name="Sugiyama T."/>
            <person name="Irie R."/>
            <person name="Wakamatsu A."/>
            <person name="Hayashi K."/>
            <person name="Sato H."/>
            <person name="Nagai K."/>
            <person name="Kimura K."/>
            <person name="Makita H."/>
            <person name="Sekine M."/>
            <person name="Obayashi M."/>
            <person name="Nishi T."/>
            <person name="Shibahara T."/>
            <person name="Tanaka T."/>
            <person name="Ishii S."/>
            <person name="Yamamoto J."/>
            <person name="Saito K."/>
            <person name="Kawai Y."/>
            <person name="Isono Y."/>
            <person name="Nakamura Y."/>
            <person name="Nagahari K."/>
            <person name="Murakami K."/>
            <person name="Yasuda T."/>
            <person name="Iwayanagi T."/>
            <person name="Wagatsuma M."/>
            <person name="Shiratori A."/>
            <person name="Sudo H."/>
            <person name="Hosoiri T."/>
            <person name="Kaku Y."/>
            <person name="Kodaira H."/>
            <person name="Kondo H."/>
            <person name="Sugawara M."/>
            <person name="Takahashi M."/>
            <person name="Kanda K."/>
            <person name="Yokoi T."/>
            <person name="Furuya T."/>
            <person name="Kikkawa E."/>
            <person name="Omura Y."/>
            <person name="Abe K."/>
            <person name="Kamihara K."/>
            <person name="Katsuta N."/>
            <person name="Sato K."/>
            <person name="Tanikawa M."/>
            <person name="Yamazaki M."/>
            <person name="Ninomiya K."/>
            <person name="Ishibashi T."/>
            <person name="Yamashita H."/>
            <person name="Murakawa K."/>
            <person name="Fujimori K."/>
            <person name="Tanai H."/>
            <person name="Kimata M."/>
            <person name="Watanabe M."/>
            <person name="Hiraoka S."/>
            <person name="Chiba Y."/>
            <person name="Ishida S."/>
            <person name="Ono Y."/>
            <person name="Takiguchi S."/>
            <person name="Watanabe S."/>
            <person name="Yosida M."/>
            <person name="Hotuta T."/>
            <person name="Kusano J."/>
            <person name="Kanehori K."/>
            <person name="Takahashi-Fujii A."/>
            <person name="Hara H."/>
            <person name="Tanase T.-O."/>
            <person name="Nomura Y."/>
            <person name="Togiya S."/>
            <person name="Komai F."/>
            <person name="Hara R."/>
            <person name="Takeuchi K."/>
            <person name="Arita M."/>
            <person name="Imose N."/>
            <person name="Musashino K."/>
            <person name="Yuuki H."/>
            <person name="Oshima A."/>
            <person name="Sasaki N."/>
            <person name="Aotsuka S."/>
            <person name="Yoshikawa Y."/>
            <person name="Matsunawa H."/>
            <person name="Ichihara T."/>
            <person name="Shiohata N."/>
            <person name="Sano S."/>
            <person name="Moriya S."/>
            <person name="Momiyama H."/>
            <person name="Satoh N."/>
            <person name="Takami S."/>
            <person name="Terashima Y."/>
            <person name="Suzuki O."/>
            <person name="Nakagawa S."/>
            <person name="Senoh A."/>
            <person name="Mizoguchi H."/>
            <person name="Goto Y."/>
            <person name="Shimizu F."/>
            <person name="Wakebe H."/>
            <person name="Hishigaki H."/>
            <person name="Watanabe T."/>
            <person name="Sugiyama A."/>
            <person name="Takemoto M."/>
            <person name="Kawakami B."/>
            <person name="Yamazaki M."/>
            <person name="Watanabe K."/>
            <person name="Kumagai A."/>
            <person name="Itakura S."/>
            <person name="Fukuzumi Y."/>
            <person name="Fujimori Y."/>
            <person name="Komiyama M."/>
            <person name="Tashiro H."/>
            <person name="Tanigami A."/>
            <person name="Fujiwara T."/>
            <person name="Ono T."/>
            <person name="Yamada K."/>
            <person name="Fujii Y."/>
            <person name="Ozaki K."/>
            <person name="Hirao M."/>
            <person name="Ohmori Y."/>
            <person name="Kawabata A."/>
            <person name="Hikiji T."/>
            <person name="Kobatake N."/>
            <person name="Inagaki H."/>
            <person name="Ikema Y."/>
            <person name="Okamoto S."/>
            <person name="Okitani R."/>
            <person name="Kawakami T."/>
            <person name="Noguchi S."/>
            <person name="Itoh T."/>
            <person name="Shigeta K."/>
            <person name="Senba T."/>
            <person name="Matsumura K."/>
            <person name="Nakajima Y."/>
            <person name="Mizuno T."/>
            <person name="Morinaga M."/>
            <person name="Sasaki M."/>
            <person name="Togashi T."/>
            <person name="Oyama M."/>
            <person name="Hata H."/>
            <person name="Watanabe M."/>
            <person name="Komatsu T."/>
            <person name="Mizushima-Sugano J."/>
            <person name="Satoh T."/>
            <person name="Shirai Y."/>
            <person name="Takahashi Y."/>
            <person name="Nakagawa K."/>
            <person name="Okumura K."/>
            <person name="Nagase T."/>
            <person name="Nomura N."/>
            <person name="Kikuchi H."/>
            <person name="Masuho Y."/>
            <person name="Yamashita R."/>
            <person name="Nakai K."/>
            <person name="Yada T."/>
            <person name="Nakamura Y."/>
            <person name="Ohara O."/>
            <person name="Isogai T."/>
            <person name="Sugano S."/>
        </authorList>
    </citation>
    <scope>NUCLEOTIDE SEQUENCE [LARGE SCALE MRNA] OF 1-423 (ISOFORMS 1/2/3)</scope>
    <scope>NUCLEOTIDE SEQUENCE [LARGE SCALE MRNA] OF 639-1323 (ISOFORM 2)</scope>
    <source>
        <tissue>Amygdala</tissue>
        <tissue>Placenta</tissue>
    </source>
</reference>
<reference key="7">
    <citation type="journal article" date="2007" name="Mol. Cell">
        <title>PHLPP and a second isoform, PHLPP2, differentially attenuate the amplitude of Akt signaling by regulating distinct Akt isoforms.</title>
        <authorList>
            <person name="Brognard J."/>
            <person name="Sierecki E."/>
            <person name="Gao T."/>
            <person name="Newton A.C."/>
        </authorList>
    </citation>
    <scope>FUNCTION</scope>
    <scope>SUBCELLULAR LOCATION</scope>
    <scope>CATALYTIC ACTIVITY</scope>
    <scope>INTERACTION WITH AKT1 AND AKT3</scope>
</reference>
<reference key="8">
    <citation type="journal article" date="2008" name="J. Biol. Chem.">
        <title>The phosphatase PHLPP controls the cellular levels of protein kinase C.</title>
        <authorList>
            <person name="Gao T."/>
            <person name="Brognard J."/>
            <person name="Newton A.C."/>
        </authorList>
    </citation>
    <scope>FUNCTION</scope>
    <scope>INTERACTION WITH PRKCB</scope>
</reference>
<reference key="9">
    <citation type="journal article" date="2009" name="Cancer Cell">
        <title>FKBP51 affects cancer cell response to chemotherapy by negatively regulating Akt.</title>
        <authorList>
            <person name="Pei H."/>
            <person name="Li L."/>
            <person name="Fridley B.L."/>
            <person name="Jenkins G.D."/>
            <person name="Kalari K.R."/>
            <person name="Lingle W."/>
            <person name="Petersen G."/>
            <person name="Lou Z."/>
            <person name="Wang L."/>
        </authorList>
    </citation>
    <scope>INTERACTION WITH FKBP5; AKT2 AND AKT3</scope>
</reference>
<reference key="10">
    <citation type="journal article" date="2009" name="Oncogene">
        <title>Loss of PHLPP expression in colon cancer: role in proliferation and tumorigenesis.</title>
        <authorList>
            <person name="Liu J."/>
            <person name="Weiss H.L."/>
            <person name="Rychahou P."/>
            <person name="Jackson L.N."/>
            <person name="Evers B.M."/>
            <person name="Gao T."/>
        </authorList>
    </citation>
    <scope>FUNCTION</scope>
    <scope>SUBCELLULAR LOCATION</scope>
    <scope>TISSUE SPECIFICITY</scope>
</reference>
<reference key="11">
    <citation type="journal article" date="2010" name="Mol. Cell">
        <title>Mst1 is an interacting protein that mediates PHLPPs' induced apoptosis.</title>
        <authorList>
            <person name="Qiao M."/>
            <person name="Wang Y."/>
            <person name="Xu X."/>
            <person name="Lu J."/>
            <person name="Dong Y."/>
            <person name="Tao W."/>
            <person name="Stein J."/>
            <person name="Stein G.S."/>
            <person name="Iglehart J.D."/>
            <person name="Shi Q."/>
            <person name="Pardee A.B."/>
        </authorList>
    </citation>
    <scope>FUNCTION</scope>
    <scope>INTERACTION WITH STK4</scope>
</reference>
<reference key="12">
    <citation type="journal article" date="2011" name="Mol. Cell. Biol.">
        <title>PHLPP-mediated dephosphorylation of S6K1 inhibits protein translation and cell growth.</title>
        <authorList>
            <person name="Liu J."/>
            <person name="Stevens P.D."/>
            <person name="Li X."/>
            <person name="Schmidt M.D."/>
            <person name="Gao T."/>
        </authorList>
    </citation>
    <scope>FUNCTION</scope>
    <scope>INTERACTION WITH RPS6KB1</scope>
</reference>
<reference key="13">
    <citation type="journal article" date="2012" name="Oncogene">
        <title>PTEN, NHERF1 and PHLPP form a tumor suppressor network that is disabled in glioblastoma.</title>
        <authorList>
            <person name="Molina J.R."/>
            <person name="Agarwal N.K."/>
            <person name="Morales F.C."/>
            <person name="Hayashi Y."/>
            <person name="Aldape K.D."/>
            <person name="Cote G."/>
            <person name="Georgescu M.M."/>
        </authorList>
    </citation>
    <scope>INTERACTION WITH NHERF1</scope>
</reference>
<reference key="14">
    <citation type="journal article" date="2013" name="J. Proteome Res.">
        <title>Toward a comprehensive characterization of a human cancer cell phosphoproteome.</title>
        <authorList>
            <person name="Zhou H."/>
            <person name="Di Palma S."/>
            <person name="Preisinger C."/>
            <person name="Peng M."/>
            <person name="Polat A.N."/>
            <person name="Heck A.J."/>
            <person name="Mohammed S."/>
        </authorList>
    </citation>
    <scope>PHOSPHORYLATION [LARGE SCALE ANALYSIS] AT SER-1210</scope>
    <scope>IDENTIFICATION BY MASS SPECTROMETRY [LARGE SCALE ANALYSIS]</scope>
    <source>
        <tissue>Erythroleukemia</tissue>
    </source>
</reference>
<reference key="15">
    <citation type="journal article" date="2014" name="Biochemistry">
        <title>Biochemical characterization of the phosphatase domain of the tumor suppressor PH domain leucine-rich repeat protein phosphatase.</title>
        <authorList>
            <person name="Sierecki E."/>
            <person name="Newton A.C."/>
        </authorList>
    </citation>
    <scope>CATALYTIC ACTIVITY</scope>
    <scope>COFACTOR</scope>
    <scope>ACTIVITY REGULATION</scope>
    <scope>MUTAGENESIS OF PHE-783; ASP-806; PHE-808; GLU-989 AND ASP-1024</scope>
</reference>
<reference key="16">
    <citation type="journal article" date="2014" name="Gastroenterology">
        <title>PHLPP is a negative regulator of RAF1, which reduces colorectal cancer cell motility and prevents tumor progression in mice.</title>
        <authorList>
            <person name="Li X."/>
            <person name="Stevens P.D."/>
            <person name="Liu J."/>
            <person name="Yang H."/>
            <person name="Wang W."/>
            <person name="Wang C."/>
            <person name="Zeng Z."/>
            <person name="Schmidt M.D."/>
            <person name="Yang M."/>
            <person name="Lee E.Y."/>
            <person name="Gao T."/>
        </authorList>
    </citation>
    <scope>FUNCTION</scope>
    <scope>INTERACTION WITH RAF1</scope>
</reference>
<proteinExistence type="evidence at protein level"/>
<gene>
    <name type="primary">PHLPP2</name>
    <name type="synonym">KIAA0931</name>
    <name type="synonym">PHLPPL</name>
</gene>
<accession>Q6ZVD8</accession>
<accession>A1L374</accession>
<accession>Q9NV17</accession>
<accession>Q9Y2E3</accession>
<protein>
    <recommendedName>
        <fullName>PH domain leucine-rich repeat-containing protein phosphatase 2</fullName>
        <ecNumber evidence="5 13">3.1.3.16</ecNumber>
    </recommendedName>
    <alternativeName>
        <fullName>PH domain leucine-rich repeat-containing protein phosphatase-like</fullName>
        <shortName>PHLPP-like</shortName>
    </alternativeName>
</protein>
<organism>
    <name type="scientific">Homo sapiens</name>
    <name type="common">Human</name>
    <dbReference type="NCBI Taxonomy" id="9606"/>
    <lineage>
        <taxon>Eukaryota</taxon>
        <taxon>Metazoa</taxon>
        <taxon>Chordata</taxon>
        <taxon>Craniata</taxon>
        <taxon>Vertebrata</taxon>
        <taxon>Euteleostomi</taxon>
        <taxon>Mammalia</taxon>
        <taxon>Eutheria</taxon>
        <taxon>Euarchontoglires</taxon>
        <taxon>Primates</taxon>
        <taxon>Haplorrhini</taxon>
        <taxon>Catarrhini</taxon>
        <taxon>Hominidae</taxon>
        <taxon>Homo</taxon>
    </lineage>
</organism>
<dbReference type="EC" id="3.1.3.16" evidence="5 13"/>
<dbReference type="EMBL" id="AB023148">
    <property type="protein sequence ID" value="BAA76775.2"/>
    <property type="status" value="ALT_INIT"/>
    <property type="molecule type" value="mRNA"/>
</dbReference>
<dbReference type="EMBL" id="BX647823">
    <property type="status" value="NOT_ANNOTATED_CDS"/>
    <property type="molecule type" value="mRNA"/>
</dbReference>
<dbReference type="EMBL" id="AC009097">
    <property type="status" value="NOT_ANNOTATED_CDS"/>
    <property type="molecule type" value="Genomic_DNA"/>
</dbReference>
<dbReference type="EMBL" id="BC129927">
    <property type="protein sequence ID" value="AAI29928.1"/>
    <property type="molecule type" value="mRNA"/>
</dbReference>
<dbReference type="EMBL" id="AK001854">
    <property type="protein sequence ID" value="BAA91943.1"/>
    <property type="status" value="ALT_INIT"/>
    <property type="molecule type" value="mRNA"/>
</dbReference>
<dbReference type="EMBL" id="AK124678">
    <property type="protein sequence ID" value="BAC85924.1"/>
    <property type="molecule type" value="mRNA"/>
</dbReference>
<dbReference type="CCDS" id="CCDS32479.1">
    <molecule id="Q6ZVD8-1"/>
</dbReference>
<dbReference type="CCDS" id="CCDS73910.1">
    <molecule id="Q6ZVD8-3"/>
</dbReference>
<dbReference type="RefSeq" id="NP_001275932.1">
    <molecule id="Q6ZVD8-3"/>
    <property type="nucleotide sequence ID" value="NM_001289003.1"/>
</dbReference>
<dbReference type="RefSeq" id="NP_055835.2">
    <molecule id="Q6ZVD8-1"/>
    <property type="nucleotide sequence ID" value="NM_015020.3"/>
</dbReference>
<dbReference type="SMR" id="Q6ZVD8"/>
<dbReference type="BioGRID" id="116674">
    <property type="interactions" value="33"/>
</dbReference>
<dbReference type="CORUM" id="Q6ZVD8"/>
<dbReference type="DIP" id="DIP-53556N"/>
<dbReference type="FunCoup" id="Q6ZVD8">
    <property type="interactions" value="1624"/>
</dbReference>
<dbReference type="IntAct" id="Q6ZVD8">
    <property type="interactions" value="25"/>
</dbReference>
<dbReference type="MINT" id="Q6ZVD8"/>
<dbReference type="STRING" id="9606.ENSP00000457991"/>
<dbReference type="BindingDB" id="Q6ZVD8"/>
<dbReference type="ChEMBL" id="CHEMBL1275209"/>
<dbReference type="DEPOD" id="PHLPP2"/>
<dbReference type="GlyGen" id="Q6ZVD8">
    <property type="glycosylation" value="6 sites, 1 O-linked glycan (4 sites)"/>
</dbReference>
<dbReference type="iPTMnet" id="Q6ZVD8"/>
<dbReference type="PhosphoSitePlus" id="Q6ZVD8"/>
<dbReference type="BioMuta" id="PHLPP2"/>
<dbReference type="DMDM" id="116242711"/>
<dbReference type="jPOST" id="Q6ZVD8"/>
<dbReference type="MassIVE" id="Q6ZVD8"/>
<dbReference type="PaxDb" id="9606-ENSP00000457991"/>
<dbReference type="PeptideAtlas" id="Q6ZVD8"/>
<dbReference type="ProteomicsDB" id="68409">
    <molecule id="Q6ZVD8-1"/>
</dbReference>
<dbReference type="ProteomicsDB" id="68410">
    <molecule id="Q6ZVD8-2"/>
</dbReference>
<dbReference type="ProteomicsDB" id="68411">
    <molecule id="Q6ZVD8-3"/>
</dbReference>
<dbReference type="Pumba" id="Q6ZVD8"/>
<dbReference type="Antibodypedia" id="30102">
    <property type="antibodies" value="161 antibodies from 34 providers"/>
</dbReference>
<dbReference type="DNASU" id="23035"/>
<dbReference type="Ensembl" id="ENST00000393524.6">
    <molecule id="Q6ZVD8-3"/>
    <property type="protein sequence ID" value="ENSP00000377159.2"/>
    <property type="gene ID" value="ENSG00000040199.18"/>
</dbReference>
<dbReference type="Ensembl" id="ENST00000568954.5">
    <molecule id="Q6ZVD8-1"/>
    <property type="protein sequence ID" value="ENSP00000457991.1"/>
    <property type="gene ID" value="ENSG00000040199.18"/>
</dbReference>
<dbReference type="GeneID" id="23035"/>
<dbReference type="KEGG" id="hsa:23035"/>
<dbReference type="MANE-Select" id="ENST00000568954.5">
    <property type="protein sequence ID" value="ENSP00000457991.1"/>
    <property type="RefSeq nucleotide sequence ID" value="NM_015020.3"/>
    <property type="RefSeq protein sequence ID" value="NP_055835.2"/>
</dbReference>
<dbReference type="UCSC" id="uc002fax.5">
    <molecule id="Q6ZVD8-1"/>
    <property type="organism name" value="human"/>
</dbReference>
<dbReference type="AGR" id="HGNC:29149"/>
<dbReference type="CTD" id="23035"/>
<dbReference type="DisGeNET" id="23035"/>
<dbReference type="GeneCards" id="PHLPP2"/>
<dbReference type="HGNC" id="HGNC:29149">
    <property type="gene designation" value="PHLPP2"/>
</dbReference>
<dbReference type="HPA" id="ENSG00000040199">
    <property type="expression patterns" value="Tissue enhanced (intestine, retina)"/>
</dbReference>
<dbReference type="MalaCards" id="PHLPP2"/>
<dbReference type="MIM" id="611066">
    <property type="type" value="gene"/>
</dbReference>
<dbReference type="neXtProt" id="NX_Q6ZVD8"/>
<dbReference type="OpenTargets" id="ENSG00000040199"/>
<dbReference type="PharmGKB" id="PA165450496"/>
<dbReference type="VEuPathDB" id="HostDB:ENSG00000040199"/>
<dbReference type="eggNOG" id="KOG0618">
    <property type="taxonomic scope" value="Eukaryota"/>
</dbReference>
<dbReference type="eggNOG" id="KOG0619">
    <property type="taxonomic scope" value="Eukaryota"/>
</dbReference>
<dbReference type="GeneTree" id="ENSGT00940000159841"/>
<dbReference type="HOGENOM" id="CLU_003020_0_0_1"/>
<dbReference type="InParanoid" id="Q6ZVD8"/>
<dbReference type="OMA" id="WERNMWF"/>
<dbReference type="OrthoDB" id="1394818at2759"/>
<dbReference type="PAN-GO" id="Q6ZVD8">
    <property type="GO annotations" value="4 GO annotations based on evolutionary models"/>
</dbReference>
<dbReference type="PhylomeDB" id="Q6ZVD8"/>
<dbReference type="TreeFam" id="TF315993"/>
<dbReference type="PathwayCommons" id="Q6ZVD8"/>
<dbReference type="Reactome" id="R-HSA-199418">
    <property type="pathway name" value="Negative regulation of the PI3K/AKT network"/>
</dbReference>
<dbReference type="SABIO-RK" id="Q6ZVD8"/>
<dbReference type="SignaLink" id="Q6ZVD8"/>
<dbReference type="SIGNOR" id="Q6ZVD8"/>
<dbReference type="BioGRID-ORCS" id="23035">
    <property type="hits" value="10 hits in 1163 CRISPR screens"/>
</dbReference>
<dbReference type="ChiTaRS" id="PHLPP2">
    <property type="organism name" value="human"/>
</dbReference>
<dbReference type="GeneWiki" id="PHLPPL"/>
<dbReference type="GenomeRNAi" id="23035"/>
<dbReference type="Pharos" id="Q6ZVD8">
    <property type="development level" value="Tbio"/>
</dbReference>
<dbReference type="PRO" id="PR:Q6ZVD8"/>
<dbReference type="Proteomes" id="UP000005640">
    <property type="component" value="Chromosome 16"/>
</dbReference>
<dbReference type="RNAct" id="Q6ZVD8">
    <property type="molecule type" value="protein"/>
</dbReference>
<dbReference type="Bgee" id="ENSG00000040199">
    <property type="expression patterns" value="Expressed in ileal mucosa and 176 other cell types or tissues"/>
</dbReference>
<dbReference type="ExpressionAtlas" id="Q6ZVD8">
    <property type="expression patterns" value="baseline and differential"/>
</dbReference>
<dbReference type="GO" id="GO:0005929">
    <property type="term" value="C:cilium"/>
    <property type="evidence" value="ECO:0000314"/>
    <property type="project" value="HPA"/>
</dbReference>
<dbReference type="GO" id="GO:0005737">
    <property type="term" value="C:cytoplasm"/>
    <property type="evidence" value="ECO:0000314"/>
    <property type="project" value="LIFEdb"/>
</dbReference>
<dbReference type="GO" id="GO:0005829">
    <property type="term" value="C:cytosol"/>
    <property type="evidence" value="ECO:0000314"/>
    <property type="project" value="HPA"/>
</dbReference>
<dbReference type="GO" id="GO:0045171">
    <property type="term" value="C:intercellular bridge"/>
    <property type="evidence" value="ECO:0000314"/>
    <property type="project" value="HPA"/>
</dbReference>
<dbReference type="GO" id="GO:0072686">
    <property type="term" value="C:mitotic spindle"/>
    <property type="evidence" value="ECO:0000314"/>
    <property type="project" value="HPA"/>
</dbReference>
<dbReference type="GO" id="GO:0005634">
    <property type="term" value="C:nucleus"/>
    <property type="evidence" value="ECO:0007669"/>
    <property type="project" value="UniProtKB-SubCell"/>
</dbReference>
<dbReference type="GO" id="GO:0001917">
    <property type="term" value="C:photoreceptor inner segment"/>
    <property type="evidence" value="ECO:0007669"/>
    <property type="project" value="Ensembl"/>
</dbReference>
<dbReference type="GO" id="GO:0042622">
    <property type="term" value="C:photoreceptor outer segment membrane"/>
    <property type="evidence" value="ECO:0007669"/>
    <property type="project" value="Ensembl"/>
</dbReference>
<dbReference type="GO" id="GO:0046872">
    <property type="term" value="F:metal ion binding"/>
    <property type="evidence" value="ECO:0007669"/>
    <property type="project" value="UniProtKB-KW"/>
</dbReference>
<dbReference type="GO" id="GO:0004722">
    <property type="term" value="F:protein serine/threonine phosphatase activity"/>
    <property type="evidence" value="ECO:0007669"/>
    <property type="project" value="UniProtKB-EC"/>
</dbReference>
<dbReference type="GO" id="GO:0021766">
    <property type="term" value="P:hippocampus development"/>
    <property type="evidence" value="ECO:0007669"/>
    <property type="project" value="Ensembl"/>
</dbReference>
<dbReference type="GO" id="GO:0035556">
    <property type="term" value="P:intracellular signal transduction"/>
    <property type="evidence" value="ECO:0000318"/>
    <property type="project" value="GO_Central"/>
</dbReference>
<dbReference type="CDD" id="cd13322">
    <property type="entry name" value="PH_PHLPP-like"/>
    <property type="match status" value="1"/>
</dbReference>
<dbReference type="CDD" id="cd00143">
    <property type="entry name" value="PP2Cc"/>
    <property type="match status" value="1"/>
</dbReference>
<dbReference type="CDD" id="cd17241">
    <property type="entry name" value="RA_PHLPP2"/>
    <property type="match status" value="1"/>
</dbReference>
<dbReference type="FunFam" id="3.80.10.10:FF:000027">
    <property type="entry name" value="PH domain and leucine rich repeat protein phosphatase 2"/>
    <property type="match status" value="1"/>
</dbReference>
<dbReference type="FunFam" id="3.80.10.10:FF:000120">
    <property type="entry name" value="PH domain and leucine rich repeat protein phosphatase 2"/>
    <property type="match status" value="1"/>
</dbReference>
<dbReference type="FunFam" id="3.60.40.10:FF:000003">
    <property type="entry name" value="PH domain and leucine-rich repeat protein phosphatase 1"/>
    <property type="match status" value="1"/>
</dbReference>
<dbReference type="FunFam" id="3.80.10.10:FF:000143">
    <property type="entry name" value="PH domain leucine-rich repeat-containing protein phosphatase 2 isoform X1"/>
    <property type="match status" value="1"/>
</dbReference>
<dbReference type="Gene3D" id="3.60.40.10">
    <property type="entry name" value="PPM-type phosphatase domain"/>
    <property type="match status" value="1"/>
</dbReference>
<dbReference type="Gene3D" id="3.80.10.10">
    <property type="entry name" value="Ribonuclease Inhibitor"/>
    <property type="match status" value="3"/>
</dbReference>
<dbReference type="InterPro" id="IPR001611">
    <property type="entry name" value="Leu-rich_rpt"/>
</dbReference>
<dbReference type="InterPro" id="IPR003591">
    <property type="entry name" value="Leu-rich_rpt_typical-subtyp"/>
</dbReference>
<dbReference type="InterPro" id="IPR032675">
    <property type="entry name" value="LRR_dom_sf"/>
</dbReference>
<dbReference type="InterPro" id="IPR050216">
    <property type="entry name" value="LRR_domain-containing"/>
</dbReference>
<dbReference type="InterPro" id="IPR036457">
    <property type="entry name" value="PPM-type-like_dom_sf"/>
</dbReference>
<dbReference type="InterPro" id="IPR001932">
    <property type="entry name" value="PPM-type_phosphatase-like_dom"/>
</dbReference>
<dbReference type="InterPro" id="IPR055071">
    <property type="entry name" value="RA_PHLPP-like"/>
</dbReference>
<dbReference type="PANTHER" id="PTHR48051">
    <property type="match status" value="1"/>
</dbReference>
<dbReference type="PANTHER" id="PTHR48051:SF1">
    <property type="entry name" value="RAS SUPPRESSOR PROTEIN 1"/>
    <property type="match status" value="1"/>
</dbReference>
<dbReference type="Pfam" id="PF00560">
    <property type="entry name" value="LRR_1"/>
    <property type="match status" value="1"/>
</dbReference>
<dbReference type="Pfam" id="PF13516">
    <property type="entry name" value="LRR_6"/>
    <property type="match status" value="2"/>
</dbReference>
<dbReference type="Pfam" id="PF13855">
    <property type="entry name" value="LRR_8"/>
    <property type="match status" value="2"/>
</dbReference>
<dbReference type="Pfam" id="PF00481">
    <property type="entry name" value="PP2C"/>
    <property type="match status" value="1"/>
</dbReference>
<dbReference type="Pfam" id="PF23010">
    <property type="entry name" value="RA_3"/>
    <property type="match status" value="1"/>
</dbReference>
<dbReference type="SMART" id="SM00364">
    <property type="entry name" value="LRR_BAC"/>
    <property type="match status" value="12"/>
</dbReference>
<dbReference type="SMART" id="SM00369">
    <property type="entry name" value="LRR_TYP"/>
    <property type="match status" value="13"/>
</dbReference>
<dbReference type="SMART" id="SM00332">
    <property type="entry name" value="PP2Cc"/>
    <property type="match status" value="1"/>
</dbReference>
<dbReference type="SUPFAM" id="SSF52058">
    <property type="entry name" value="L domain-like"/>
    <property type="match status" value="2"/>
</dbReference>
<dbReference type="SUPFAM" id="SSF50729">
    <property type="entry name" value="PH domain-like"/>
    <property type="match status" value="1"/>
</dbReference>
<dbReference type="SUPFAM" id="SSF81606">
    <property type="entry name" value="PP2C-like"/>
    <property type="match status" value="1"/>
</dbReference>
<dbReference type="PROSITE" id="PS51450">
    <property type="entry name" value="LRR"/>
    <property type="match status" value="18"/>
</dbReference>
<dbReference type="PROSITE" id="PS51746">
    <property type="entry name" value="PPM_2"/>
    <property type="match status" value="1"/>
</dbReference>
<comment type="function">
    <text evidence="5 6 7 9 11 12">Protein phosphatase involved in regulation of Akt and PKC signaling. Mediates dephosphorylation in the C-terminal domain hydrophobic motif of members of the AGC Ser/Thr protein kinase family; specifically acts on 'Ser-473' of AKT1, 'Ser-660' of PRKCB isoform beta-II and 'Ser-657' of PRKCA. Akt regulates the balance between cell survival and apoptosis through a cascade that primarily alters the function of transcription factors that regulate pro- and antiapoptotic genes. Dephosphorylation of 'Ser-473' of Akt triggers apoptosis and decreases cell proliferation. Also controls the phosphorylation of AKT3. Dephosphorylates STK4 on 'Thr-387' leading to STK4 activation and apoptosis (PubMed:20513427). Dephosphorylates RPS6KB1 and is involved in regulation of cap-dependent translation (PubMed:21986499). Inhibits cancer cell proliferation and may act as a tumor suppressor. Dephosphorylation of PRKCA and PRKCB leads to their destabilization and degradation. Dephosphorylates RAF1 inhibiting its kinase activity (PubMed:24530606).</text>
</comment>
<comment type="catalytic activity">
    <reaction evidence="5 13">
        <text>O-phospho-L-seryl-[protein] + H2O = L-seryl-[protein] + phosphate</text>
        <dbReference type="Rhea" id="RHEA:20629"/>
        <dbReference type="Rhea" id="RHEA-COMP:9863"/>
        <dbReference type="Rhea" id="RHEA-COMP:11604"/>
        <dbReference type="ChEBI" id="CHEBI:15377"/>
        <dbReference type="ChEBI" id="CHEBI:29999"/>
        <dbReference type="ChEBI" id="CHEBI:43474"/>
        <dbReference type="ChEBI" id="CHEBI:83421"/>
        <dbReference type="EC" id="3.1.3.16"/>
    </reaction>
</comment>
<comment type="catalytic activity">
    <reaction evidence="5 13">
        <text>O-phospho-L-threonyl-[protein] + H2O = L-threonyl-[protein] + phosphate</text>
        <dbReference type="Rhea" id="RHEA:47004"/>
        <dbReference type="Rhea" id="RHEA-COMP:11060"/>
        <dbReference type="Rhea" id="RHEA-COMP:11605"/>
        <dbReference type="ChEBI" id="CHEBI:15377"/>
        <dbReference type="ChEBI" id="CHEBI:30013"/>
        <dbReference type="ChEBI" id="CHEBI:43474"/>
        <dbReference type="ChEBI" id="CHEBI:61977"/>
        <dbReference type="EC" id="3.1.3.16"/>
    </reaction>
</comment>
<comment type="cofactor">
    <cofactor evidence="1">
        <name>Mn(2+)</name>
        <dbReference type="ChEBI" id="CHEBI:29035"/>
    </cofactor>
    <text evidence="1 13">Binds 2 manganese ions per subunit. Mn(2+) is inhibitory below pH 8 and activating above pH 8 (PubMed:24892992).</text>
</comment>
<comment type="activity regulation">
    <text evidence="13 16">Inhibited by AKT1, AKT2 and AKT3. Activated by oleic acid and arachidonic acid (PubMed:24892992).</text>
</comment>
<comment type="biophysicochemical properties">
    <kinetics>
        <KM>4.13 mM for p-nitrophenyl phosphate</KM>
    </kinetics>
</comment>
<comment type="subunit">
    <text evidence="5 6 8 9 10 11 12">Interacts with AKT1, AKT3 and PRKCB isoform beta-II (PubMed:17386267, PubMed:18162466, PubMed:19732725). Interacts with STK4, RPS6KB1, RAF1 (PubMed:20513427, PubMed:21986499, PubMed:24530606). Interacts with FKBP5; FKBP5 acts as a scaffold for PHLPP2 and Akt (PubMed:19732725). Interacts with NHERF1; NHERF1 scaffolds a heterotrimeric complex with PTEN (PubMed:21804599).</text>
</comment>
<comment type="interaction">
    <interactant intactId="EBI-2511496">
        <id>Q6ZVD8</id>
    </interactant>
    <interactant intactId="EBI-349787">
        <id>O14745</id>
        <label>NHERF1</label>
    </interactant>
    <organismsDiffer>false</organismsDiffer>
    <experiments>6</experiments>
</comment>
<comment type="interaction">
    <interactant intactId="EBI-2511496">
        <id>Q6ZVD8</id>
    </interactant>
    <interactant intactId="EBI-5774511">
        <id>P05771-2</id>
        <label>PRKCB</label>
    </interactant>
    <organismsDiffer>false</organismsDiffer>
    <experiments>2</experiments>
</comment>
<comment type="subcellular location">
    <subcellularLocation>
        <location>Cytoplasm</location>
    </subcellularLocation>
    <subcellularLocation>
        <location>Membrane</location>
        <topology>Peripheral membrane protein</topology>
    </subcellularLocation>
    <subcellularLocation>
        <location>Nucleus</location>
    </subcellularLocation>
    <text>In colorectal cancer tissue, expression is concentrated in the cytoplasm and nucleus.</text>
</comment>
<comment type="alternative products">
    <event type="alternative splicing"/>
    <isoform>
        <id>Q6ZVD8-1</id>
        <name>1</name>
        <sequence type="displayed"/>
    </isoform>
    <isoform>
        <id>Q6ZVD8-2</id>
        <name>2</name>
        <sequence type="described" ref="VSP_014056 VSP_014057"/>
    </isoform>
    <isoform>
        <id>Q6ZVD8-3</id>
        <name>3</name>
        <sequence type="described" ref="VSP_017265"/>
    </isoform>
</comment>
<comment type="tissue specificity">
    <text evidence="7">In colorectal cancer tissue, expression is highest in the surface epithelium of normal colonic mucosa adjacent to the cancer tissue but is largely excluded from the crypt bases. Expression is lost or significantly decreased in 80% of tested tumors (at protein level).</text>
</comment>
<comment type="sequence caution" evidence="16">
    <conflict type="erroneous initiation">
        <sequence resource="EMBL-CDS" id="BAA76775"/>
    </conflict>
</comment>
<comment type="sequence caution" evidence="16">
    <conflict type="erroneous initiation">
        <sequence resource="EMBL-CDS" id="BAA91943"/>
    </conflict>
</comment>
<comment type="online information" name="Atlas of Genetics and Cytogenetics in Oncology and Haematology">
    <link uri="https://atlasgeneticsoncology.org/gene/44546/PHLPP2"/>
</comment>
<sequence>MKRNGSRNCLNRRSRFGSRERDWLREDVKRGCVYLYGADTTTATTTTTTSSSSSSSSSSSDLHLVLCTVETPASEICAGEGRESLYLQLHGDLVRRLEPTERPLQIVYDYLSRLGFDDPVRIQEEATNPDLGCMIRFYGEKPCHMDRLDRILLSGIYNVRKGKTQLHKWAERLVVLCGTCLIVSSVKDCQTGKMHILPLVGGKIEEVKRRQYSLAFSSAGAQAQTYHVSFETLAEYQRWQRQASKVVSQRISTVDLSCYSLEEVPEHLFYSQDITYLNLRHNFMQLERPGGLDTLYKFSQLKGLNLSHNKLGLFPILLCEISTLTELNLSCNGFHDLPSQIGNLLNLQTLCLDGNFLTTLPEELGNLQQLSSLGISFNNFSQIPEVYEKLTMLDRVVMAGNCLEVLNLGVLNRMNHIKHVDLRMNHLKTMVIENLEGNKHITHVDLRDNRLTDLDLSSLCSLEQLHCGRNQLRELTLSGFSLRTLYASSNRLTAVNVYPVPSLLTFLDLSRNLLECVPDWACEAKKIEVLDVSYNLLTEVPVRILSSLSLRKLMLGHNHVQNLPTLVEHIPLEVLDLQHNALTRLPDTLFSKALNLRYLNASANSLESLPSACTGEESLSMLQLLYLTNNLLTDQCIPVLVGHLHLRILHLANNQLQTFPASKLNKLEQLEELNLSGNKLKTIPTTIANCKRLHTLVAHSNNISIFPEILQLPQIQFVDLSCNDLTEILIPEALPATLQDLDLTGNTNLVLEHKTLDIFSHITTLKIDQKPLPTTDSTVTSTFWSHGLAEMAGQRNKLCVSALAMDSFAEGVGAVYGMFDGDRNEELPRLLQCTMADVLLEEVQQSTNDTVFMANTFLVSHRKLGMAGQKLGSSALLCYIRPDTADPASSFSLTVANVGTCQAVLCRGGKPVPLSKVFSLEQDPEEAQRVKDQKAIITEDNKVNGVTCCTRMLGCTYLYPWILPKPHISSTPLTIQDELLILGNKALWEHLSYTEAVNAVRHVQDPLAAAKKLCTLAQSYGCQDNVGAMVVYLNIGEEGCTCEMNGLTLPGPVGFASTTTIKDAPKPATPSSSSGIASEFSSEMSTSEVSSEVGSTASDEHNAGGLDTALLPRPERRCSLHPTPTSGLFQRQPSSATFSSNQSDNGLDSDDDQPVEGVITNGSKVEVEVDIHCCRGRDLENSPPLIESSPTLCSEEHARGSCFGIRRQNSVNSGMLLPMSKDRMELQKSPSTSCLYGKKLSNGSIVPLEDSLNLIEVATEVPKRKTGYFAAPTQMEPEDQFVVPHDLEEEVKEQMKQHQDSRLEPEPHEEDRTEPPEEFDTAL</sequence>
<feature type="chain" id="PRO_0000057784" description="PH domain leucine-rich repeat-containing protein phosphatase 2">
    <location>
        <begin position="1"/>
        <end position="1323"/>
    </location>
</feature>
<feature type="domain" description="PH">
    <location>
        <begin position="150"/>
        <end position="248"/>
    </location>
</feature>
<feature type="repeat" description="LRR 1">
    <location>
        <begin position="250"/>
        <end position="271"/>
    </location>
</feature>
<feature type="repeat" description="LRR 2">
    <location>
        <begin position="273"/>
        <end position="296"/>
    </location>
</feature>
<feature type="repeat" description="LRR 3">
    <location>
        <begin position="300"/>
        <end position="321"/>
    </location>
</feature>
<feature type="repeat" description="LRR 4">
    <location>
        <begin position="323"/>
        <end position="344"/>
    </location>
</feature>
<feature type="repeat" description="LRR 5">
    <location>
        <begin position="346"/>
        <end position="368"/>
    </location>
</feature>
<feature type="repeat" description="LRR 6">
    <location>
        <begin position="369"/>
        <end position="390"/>
    </location>
</feature>
<feature type="repeat" description="LRR 7">
    <location>
        <begin position="392"/>
        <end position="412"/>
    </location>
</feature>
<feature type="repeat" description="LRR 8">
    <location>
        <begin position="416"/>
        <end position="439"/>
    </location>
</feature>
<feature type="repeat" description="LRR 9">
    <location>
        <begin position="440"/>
        <end position="460"/>
    </location>
</feature>
<feature type="repeat" description="LRR 10">
    <location>
        <begin position="461"/>
        <end position="480"/>
    </location>
</feature>
<feature type="repeat" description="LRR 11">
    <location>
        <begin position="481"/>
        <end position="502"/>
    </location>
</feature>
<feature type="repeat" description="LRR 12">
    <location>
        <begin position="503"/>
        <end position="524"/>
    </location>
</feature>
<feature type="repeat" description="LRR 13">
    <location>
        <begin position="526"/>
        <end position="547"/>
    </location>
</feature>
<feature type="repeat" description="LRR 14">
    <location>
        <begin position="549"/>
        <end position="570"/>
    </location>
</feature>
<feature type="repeat" description="LRR 15">
    <location>
        <begin position="571"/>
        <end position="592"/>
    </location>
</feature>
<feature type="repeat" description="LRR 16">
    <location>
        <begin position="595"/>
        <end position="616"/>
    </location>
</feature>
<feature type="repeat" description="LRR 17">
    <location>
        <begin position="621"/>
        <end position="644"/>
    </location>
</feature>
<feature type="repeat" description="LRR 18">
    <location>
        <begin position="645"/>
        <end position="666"/>
    </location>
</feature>
<feature type="repeat" description="LRR 19">
    <location>
        <begin position="669"/>
        <end position="690"/>
    </location>
</feature>
<feature type="repeat" description="LRR 20">
    <location>
        <begin position="692"/>
        <end position="713"/>
    </location>
</feature>
<feature type="repeat" description="LRR 21">
    <location>
        <begin position="714"/>
        <end position="735"/>
    </location>
</feature>
<feature type="repeat" description="LRR 22">
    <location>
        <begin position="737"/>
        <end position="758"/>
    </location>
</feature>
<feature type="domain" description="PPM-type phosphatase" evidence="3">
    <location>
        <begin position="785"/>
        <end position="1033"/>
    </location>
</feature>
<feature type="region of interest" description="Disordered" evidence="4">
    <location>
        <begin position="1060"/>
        <end position="1157"/>
    </location>
</feature>
<feature type="region of interest" description="Disordered" evidence="4">
    <location>
        <begin position="1285"/>
        <end position="1323"/>
    </location>
</feature>
<feature type="compositionally biased region" description="Low complexity" evidence="4">
    <location>
        <begin position="1071"/>
        <end position="1097"/>
    </location>
</feature>
<feature type="compositionally biased region" description="Polar residues" evidence="4">
    <location>
        <begin position="1122"/>
        <end position="1146"/>
    </location>
</feature>
<feature type="compositionally biased region" description="Basic and acidic residues" evidence="4">
    <location>
        <begin position="1292"/>
        <end position="1315"/>
    </location>
</feature>
<feature type="binding site" evidence="2">
    <location>
        <position position="820"/>
    </location>
    <ligand>
        <name>Mn(2+)</name>
        <dbReference type="ChEBI" id="CHEBI:29035"/>
        <label>1</label>
    </ligand>
</feature>
<feature type="binding site" evidence="2">
    <location>
        <position position="820"/>
    </location>
    <ligand>
        <name>Mn(2+)</name>
        <dbReference type="ChEBI" id="CHEBI:29035"/>
        <label>2</label>
    </ligand>
</feature>
<feature type="binding site" evidence="2">
    <location>
        <position position="821"/>
    </location>
    <ligand>
        <name>Mn(2+)</name>
        <dbReference type="ChEBI" id="CHEBI:29035"/>
        <label>1</label>
    </ligand>
</feature>
<feature type="binding site" evidence="2">
    <location>
        <position position="985"/>
    </location>
    <ligand>
        <name>Mn(2+)</name>
        <dbReference type="ChEBI" id="CHEBI:29035"/>
        <label>2</label>
    </ligand>
</feature>
<feature type="binding site" evidence="2">
    <location>
        <position position="1024"/>
    </location>
    <ligand>
        <name>Mn(2+)</name>
        <dbReference type="ChEBI" id="CHEBI:29035"/>
        <label>2</label>
    </ligand>
</feature>
<feature type="modified residue" description="Phosphoserine" evidence="17">
    <location>
        <position position="1210"/>
    </location>
</feature>
<feature type="splice variant" id="VSP_017265" description="In isoform 3." evidence="14">
    <location>
        <begin position="596"/>
        <end position="662"/>
    </location>
</feature>
<feature type="splice variant" id="VSP_014056" description="In isoform 2." evidence="15">
    <original>DNKVNGVTCCTRMLGCT</original>
    <variation>NWVLNQKHLQDFPGEDK</variation>
    <location>
        <begin position="940"/>
        <end position="956"/>
    </location>
</feature>
<feature type="splice variant" id="VSP_014057" description="In isoform 2." evidence="15">
    <location>
        <begin position="957"/>
        <end position="1323"/>
    </location>
</feature>
<feature type="mutagenesis site" description="Decreases activity." evidence="13">
    <original>F</original>
    <variation>V</variation>
    <location>
        <position position="783"/>
    </location>
</feature>
<feature type="mutagenesis site" description="Decreases activity." evidence="13">
    <original>D</original>
    <variation>N</variation>
    <location>
        <position position="806"/>
    </location>
</feature>
<feature type="mutagenesis site" description="Abolishes activity." evidence="13">
    <original>F</original>
    <variation>V</variation>
    <location>
        <position position="808"/>
    </location>
</feature>
<feature type="mutagenesis site" description="Decreases activity." evidence="13">
    <original>E</original>
    <variation>Q</variation>
    <location>
        <position position="989"/>
    </location>
</feature>
<feature type="mutagenesis site" description="Decreases activity." evidence="13">
    <original>D</original>
    <variation>N</variation>
    <location>
        <position position="1024"/>
    </location>
</feature>
<feature type="sequence conflict" description="In Ref. 3; BX647823." evidence="16" ref="3">
    <original>R</original>
    <variation>C</variation>
    <location>
        <position position="147"/>
    </location>
</feature>
<feature type="sequence conflict" description="In Ref. 4." evidence="16" ref="4">
    <original>V</original>
    <variation>L</variation>
    <location>
        <position position="542"/>
    </location>
</feature>
<feature type="sequence conflict" description="In Ref. 3; BX647823." evidence="16" ref="3">
    <original>K</original>
    <variation>E</variation>
    <location>
        <position position="766"/>
    </location>
</feature>
<feature type="sequence conflict" description="In Ref. 6; BAA91943." evidence="16" ref="6">
    <original>A</original>
    <variation>G</variation>
    <location>
        <position position="896"/>
    </location>
</feature>
<feature type="sequence conflict" description="In Ref. 3; BX647823." evidence="16" ref="3">
    <original>E</original>
    <variation>G</variation>
    <location>
        <position position="978"/>
    </location>
</feature>
<feature type="sequence conflict" description="In Ref. 3; BX647823." evidence="16" ref="3">
    <original>L</original>
    <variation>S</variation>
    <location>
        <position position="1016"/>
    </location>
</feature>
<feature type="sequence conflict" description="In Ref. 5; AAI29928." evidence="16" ref="5">
    <original>R</original>
    <variation>Q</variation>
    <location>
        <position position="1312"/>
    </location>
</feature>